<keyword id="KW-1003">Cell membrane</keyword>
<keyword id="KW-0143">Chaperone</keyword>
<keyword id="KW-0449">Lipoprotein</keyword>
<keyword id="KW-0472">Membrane</keyword>
<keyword id="KW-0564">Palmitate</keyword>
<keyword id="KW-0653">Protein transport</keyword>
<keyword id="KW-0732">Signal</keyword>
<keyword id="KW-0812">Transmembrane</keyword>
<keyword id="KW-1133">Transmembrane helix</keyword>
<keyword id="KW-0813">Transport</keyword>
<comment type="function">
    <text evidence="1">Required for the insertion and/or proper folding and/or complex formation of integral membrane proteins into the membrane. Involved in integration of membrane proteins that insert both dependently and independently of the Sec translocase complex, as well as at least some lipoproteins.</text>
</comment>
<comment type="subcellular location">
    <subcellularLocation>
        <location evidence="1">Cell membrane</location>
        <topology evidence="1">Multi-pass membrane protein</topology>
    </subcellularLocation>
</comment>
<comment type="similarity">
    <text evidence="1">Belongs to the OXA1/ALB3/YidC family. Type 2 subfamily.</text>
</comment>
<protein>
    <recommendedName>
        <fullName evidence="1">Membrane protein insertase YidC</fullName>
    </recommendedName>
    <alternativeName>
        <fullName evidence="1">Foldase YidC</fullName>
    </alternativeName>
    <alternativeName>
        <fullName evidence="1">Membrane integrase YidC</fullName>
    </alternativeName>
    <alternativeName>
        <fullName evidence="1">Membrane protein YidC</fullName>
    </alternativeName>
</protein>
<proteinExistence type="inferred from homology"/>
<name>YIDC_STAA2</name>
<organism>
    <name type="scientific">Staphylococcus aureus (strain JH1)</name>
    <dbReference type="NCBI Taxonomy" id="359787"/>
    <lineage>
        <taxon>Bacteria</taxon>
        <taxon>Bacillati</taxon>
        <taxon>Bacillota</taxon>
        <taxon>Bacilli</taxon>
        <taxon>Bacillales</taxon>
        <taxon>Staphylococcaceae</taxon>
        <taxon>Staphylococcus</taxon>
    </lineage>
</organism>
<gene>
    <name evidence="1" type="primary">yidC</name>
    <name type="ordered locus">SaurJH1_2165</name>
</gene>
<feature type="signal peptide" evidence="1">
    <location>
        <begin position="1"/>
        <end position="19"/>
    </location>
</feature>
<feature type="chain" id="PRO_5000257082" description="Membrane protein insertase YidC">
    <location>
        <begin position="20"/>
        <end position="290"/>
    </location>
</feature>
<feature type="transmembrane region" description="Helical" evidence="1">
    <location>
        <begin position="56"/>
        <end position="76"/>
    </location>
</feature>
<feature type="transmembrane region" description="Helical" evidence="1">
    <location>
        <begin position="134"/>
        <end position="154"/>
    </location>
</feature>
<feature type="transmembrane region" description="Helical" evidence="1">
    <location>
        <begin position="176"/>
        <end position="196"/>
    </location>
</feature>
<feature type="transmembrane region" description="Helical" evidence="1">
    <location>
        <begin position="207"/>
        <end position="224"/>
    </location>
</feature>
<feature type="transmembrane region" description="Helical" evidence="1">
    <location>
        <begin position="229"/>
        <end position="251"/>
    </location>
</feature>
<feature type="region of interest" description="Disordered" evidence="2">
    <location>
        <begin position="270"/>
        <end position="290"/>
    </location>
</feature>
<feature type="lipid moiety-binding region" description="N-palmitoyl cysteine" evidence="1">
    <location>
        <position position="20"/>
    </location>
</feature>
<feature type="lipid moiety-binding region" description="S-diacylglycerol cysteine" evidence="1">
    <location>
        <position position="20"/>
    </location>
</feature>
<reference key="1">
    <citation type="submission" date="2007-06" db="EMBL/GenBank/DDBJ databases">
        <title>Complete sequence of chromosome of Staphylococcus aureus subsp. aureus JH1.</title>
        <authorList>
            <consortium name="US DOE Joint Genome Institute"/>
            <person name="Copeland A."/>
            <person name="Lucas S."/>
            <person name="Lapidus A."/>
            <person name="Barry K."/>
            <person name="Detter J.C."/>
            <person name="Glavina del Rio T."/>
            <person name="Hammon N."/>
            <person name="Israni S."/>
            <person name="Dalin E."/>
            <person name="Tice H."/>
            <person name="Pitluck S."/>
            <person name="Chain P."/>
            <person name="Malfatti S."/>
            <person name="Shin M."/>
            <person name="Vergez L."/>
            <person name="Schmutz J."/>
            <person name="Larimer F."/>
            <person name="Land M."/>
            <person name="Hauser L."/>
            <person name="Kyrpides N."/>
            <person name="Ivanova N."/>
            <person name="Tomasz A."/>
            <person name="Richardson P."/>
        </authorList>
    </citation>
    <scope>NUCLEOTIDE SEQUENCE [LARGE SCALE GENOMIC DNA]</scope>
    <source>
        <strain>JH1</strain>
    </source>
</reference>
<dbReference type="EMBL" id="CP000736">
    <property type="protein sequence ID" value="ABR52994.1"/>
    <property type="molecule type" value="Genomic_DNA"/>
</dbReference>
<dbReference type="SMR" id="A6U3H6"/>
<dbReference type="KEGG" id="sah:SaurJH1_2165"/>
<dbReference type="HOGENOM" id="CLU_036138_5_2_9"/>
<dbReference type="GO" id="GO:0005886">
    <property type="term" value="C:plasma membrane"/>
    <property type="evidence" value="ECO:0007669"/>
    <property type="project" value="UniProtKB-SubCell"/>
</dbReference>
<dbReference type="GO" id="GO:0032977">
    <property type="term" value="F:membrane insertase activity"/>
    <property type="evidence" value="ECO:0007669"/>
    <property type="project" value="InterPro"/>
</dbReference>
<dbReference type="GO" id="GO:0051205">
    <property type="term" value="P:protein insertion into membrane"/>
    <property type="evidence" value="ECO:0007669"/>
    <property type="project" value="TreeGrafter"/>
</dbReference>
<dbReference type="GO" id="GO:0015031">
    <property type="term" value="P:protein transport"/>
    <property type="evidence" value="ECO:0007669"/>
    <property type="project" value="UniProtKB-KW"/>
</dbReference>
<dbReference type="CDD" id="cd20070">
    <property type="entry name" value="5TM_YidC_Alb3"/>
    <property type="match status" value="1"/>
</dbReference>
<dbReference type="HAMAP" id="MF_01811">
    <property type="entry name" value="YidC_type2"/>
    <property type="match status" value="1"/>
</dbReference>
<dbReference type="InterPro" id="IPR001708">
    <property type="entry name" value="YidC/ALB3/OXA1/COX18"/>
</dbReference>
<dbReference type="InterPro" id="IPR028055">
    <property type="entry name" value="YidC/Oxa/ALB_C"/>
</dbReference>
<dbReference type="InterPro" id="IPR023060">
    <property type="entry name" value="YidC/YidC1/YidC2_Firmicutes"/>
</dbReference>
<dbReference type="InterPro" id="IPR047196">
    <property type="entry name" value="YidC_ALB_C"/>
</dbReference>
<dbReference type="NCBIfam" id="TIGR03592">
    <property type="entry name" value="yidC_oxa1_cterm"/>
    <property type="match status" value="1"/>
</dbReference>
<dbReference type="PANTHER" id="PTHR12428:SF65">
    <property type="entry name" value="CYTOCHROME C OXIDASE ASSEMBLY PROTEIN COX18, MITOCHONDRIAL"/>
    <property type="match status" value="1"/>
</dbReference>
<dbReference type="PANTHER" id="PTHR12428">
    <property type="entry name" value="OXA1"/>
    <property type="match status" value="1"/>
</dbReference>
<dbReference type="Pfam" id="PF02096">
    <property type="entry name" value="60KD_IMP"/>
    <property type="match status" value="1"/>
</dbReference>
<dbReference type="PRINTS" id="PR00701">
    <property type="entry name" value="60KDINNERMP"/>
</dbReference>
<dbReference type="PROSITE" id="PS51257">
    <property type="entry name" value="PROKAR_LIPOPROTEIN"/>
    <property type="match status" value="1"/>
</dbReference>
<evidence type="ECO:0000255" key="1">
    <source>
        <dbReference type="HAMAP-Rule" id="MF_01811"/>
    </source>
</evidence>
<evidence type="ECO:0000256" key="2">
    <source>
        <dbReference type="SAM" id="MobiDB-lite"/>
    </source>
</evidence>
<sequence length="290" mass="33581">MKKKALLPLFLGIMVFLAGCDYSKPEKRSGFFYNTFVDPMKNVLDWLGNNLLNDNYGLAIIILVLVIRIILLPFMLSNYKNSHMMRQKMKVAKPEVEKIQEKVKRARTQEEKMAANQELMQVYKKYDMNPIKSMLGCLPMLIQLPIIMGLYFVLKDQLVDGLFKYPHFLWFDLGRPDIWITIIAGVLYFIQAYVSSKTMPDEQRQMGYMMMVISPIMIIWISLSSASALGLYWSVSAAFLVVQTHFANIYYEKVAKKEVQPFIEAYEREHNGGSNKKGKNTQVVSKKKKK</sequence>
<accession>A6U3H6</accession>